<organism>
    <name type="scientific">Shewanella baltica (strain OS195)</name>
    <dbReference type="NCBI Taxonomy" id="399599"/>
    <lineage>
        <taxon>Bacteria</taxon>
        <taxon>Pseudomonadati</taxon>
        <taxon>Pseudomonadota</taxon>
        <taxon>Gammaproteobacteria</taxon>
        <taxon>Alteromonadales</taxon>
        <taxon>Shewanellaceae</taxon>
        <taxon>Shewanella</taxon>
    </lineage>
</organism>
<name>Y1808_SHEB9</name>
<gene>
    <name type="ordered locus">Sbal195_1808</name>
</gene>
<feature type="chain" id="PRO_1000081384" description="UPF0178 protein Sbal195_1808">
    <location>
        <begin position="1"/>
        <end position="150"/>
    </location>
</feature>
<accession>A9KY73</accession>
<reference key="1">
    <citation type="submission" date="2007-11" db="EMBL/GenBank/DDBJ databases">
        <title>Complete sequence of chromosome of Shewanella baltica OS195.</title>
        <authorList>
            <consortium name="US DOE Joint Genome Institute"/>
            <person name="Copeland A."/>
            <person name="Lucas S."/>
            <person name="Lapidus A."/>
            <person name="Barry K."/>
            <person name="Glavina del Rio T."/>
            <person name="Dalin E."/>
            <person name="Tice H."/>
            <person name="Pitluck S."/>
            <person name="Chain P."/>
            <person name="Malfatti S."/>
            <person name="Shin M."/>
            <person name="Vergez L."/>
            <person name="Schmutz J."/>
            <person name="Larimer F."/>
            <person name="Land M."/>
            <person name="Hauser L."/>
            <person name="Kyrpides N."/>
            <person name="Kim E."/>
            <person name="Brettar I."/>
            <person name="Rodrigues J."/>
            <person name="Konstantinidis K."/>
            <person name="Klappenbach J."/>
            <person name="Hofle M."/>
            <person name="Tiedje J."/>
            <person name="Richardson P."/>
        </authorList>
    </citation>
    <scope>NUCLEOTIDE SEQUENCE [LARGE SCALE GENOMIC DNA]</scope>
    <source>
        <strain>OS195</strain>
    </source>
</reference>
<dbReference type="EMBL" id="CP000891">
    <property type="protein sequence ID" value="ABX48979.1"/>
    <property type="molecule type" value="Genomic_DNA"/>
</dbReference>
<dbReference type="RefSeq" id="WP_006086325.1">
    <property type="nucleotide sequence ID" value="NC_009997.1"/>
</dbReference>
<dbReference type="SMR" id="A9KY73"/>
<dbReference type="KEGG" id="sbn:Sbal195_1808"/>
<dbReference type="HOGENOM" id="CLU_106619_1_0_6"/>
<dbReference type="Proteomes" id="UP000000770">
    <property type="component" value="Chromosome"/>
</dbReference>
<dbReference type="CDD" id="cd18720">
    <property type="entry name" value="PIN_YqxD-like"/>
    <property type="match status" value="1"/>
</dbReference>
<dbReference type="HAMAP" id="MF_00489">
    <property type="entry name" value="UPF0178"/>
    <property type="match status" value="1"/>
</dbReference>
<dbReference type="InterPro" id="IPR003791">
    <property type="entry name" value="UPF0178"/>
</dbReference>
<dbReference type="NCBIfam" id="NF001095">
    <property type="entry name" value="PRK00124.1"/>
    <property type="match status" value="1"/>
</dbReference>
<dbReference type="PANTHER" id="PTHR35146">
    <property type="entry name" value="UPF0178 PROTEIN YAII"/>
    <property type="match status" value="1"/>
</dbReference>
<dbReference type="PANTHER" id="PTHR35146:SF1">
    <property type="entry name" value="UPF0178 PROTEIN YAII"/>
    <property type="match status" value="1"/>
</dbReference>
<dbReference type="Pfam" id="PF02639">
    <property type="entry name" value="DUF188"/>
    <property type="match status" value="1"/>
</dbReference>
<protein>
    <recommendedName>
        <fullName evidence="1">UPF0178 protein Sbal195_1808</fullName>
    </recommendedName>
</protein>
<evidence type="ECO:0000255" key="1">
    <source>
        <dbReference type="HAMAP-Rule" id="MF_00489"/>
    </source>
</evidence>
<comment type="similarity">
    <text evidence="1">Belongs to the UPF0178 family.</text>
</comment>
<sequence length="150" mass="16689">MSDYKIWVDADACPNPIKEILFRAAERKALPLVLVANQMIRVPPSPYINQIRVGAGFDVADQYIVYHVEPTHLVITADIPLAALIIEKGALALNPRGELYTVDNIKQKLTMRDFMEDLRGSGVHTGGPDSFSQADKQAFANSLDKWLVRV</sequence>
<proteinExistence type="inferred from homology"/>